<accession>Q8VWV6</accession>
<accession>Q9M9V5</accession>
<comment type="function">
    <text evidence="1">Transcription factor. Interacts specifically with the W box (5'-(T)TGAC[CT]-3'), a frequently occurring elicitor-responsive cis-acting element (By similarity).</text>
</comment>
<comment type="subcellular location">
    <subcellularLocation>
        <location evidence="2">Nucleus</location>
    </subcellularLocation>
</comment>
<keyword id="KW-0238">DNA-binding</keyword>
<keyword id="KW-0539">Nucleus</keyword>
<keyword id="KW-1185">Reference proteome</keyword>
<keyword id="KW-0804">Transcription</keyword>
<keyword id="KW-0805">Transcription regulation</keyword>
<protein>
    <recommendedName>
        <fullName>Probable WRKY transcription factor 61</fullName>
    </recommendedName>
    <alternativeName>
        <fullName>WRKY DNA-binding protein 61</fullName>
    </alternativeName>
</protein>
<sequence length="480" mass="52914">MDEAKEENRRLKSSLSKIKKDFDILQTQYNQLMAKHNEPTKFQSKGHHQDKGEDEDREKVNEREELVSLSLGRRLNSEVPSGSNKEEKNKDVEEAEGDRNYDDNEKSSIQGLSMGIEYKALSNPNEKLEIDHNQETMSLEISNNNKIRSQNSFGFKNDGDDHEDEDEILPQNLVKKTRVSVRSRCETPTMNDGCQWRKYGQKIAKGNPCPRAYYRCTIAASCPVRKQVQRCSEDMSILISTYEGTHNHPLPMSATAMASATSAAASMLLSGASSSSSAAADLHGLNFSLSGNNITPKPKTHFLQSPSSSGHPTVTLDLTTSSSSQQPFLSMLNRFSSPPSNVSRSNSYPSTNLNFSNNTNTLMNWGGGGNPSDQYRAAYGNINTHQQSPYHKIIQTRTAGSSFDPFGRSSSSHSPQINLDHIGIKNIISHQVPSLPAETIKAITTDPSFQSALATALSSIMGGDLKIDHNVTRNEAEKSP</sequence>
<proteinExistence type="evidence at transcript level"/>
<gene>
    <name type="primary">WRKY61</name>
    <name type="ordered locus">At1g18860</name>
    <name type="ORF">F6A14.5</name>
</gene>
<dbReference type="EMBL" id="AF452175">
    <property type="protein sequence ID" value="AAL50785.1"/>
    <property type="molecule type" value="mRNA"/>
</dbReference>
<dbReference type="EMBL" id="AC011809">
    <property type="protein sequence ID" value="AAF27095.1"/>
    <property type="molecule type" value="Genomic_DNA"/>
</dbReference>
<dbReference type="EMBL" id="CP002684">
    <property type="status" value="NOT_ANNOTATED_CDS"/>
    <property type="molecule type" value="Genomic_DNA"/>
</dbReference>
<dbReference type="PIR" id="E86322">
    <property type="entry name" value="E86322"/>
</dbReference>
<dbReference type="SMR" id="Q8VWV6"/>
<dbReference type="BioGRID" id="23706">
    <property type="interactions" value="4"/>
</dbReference>
<dbReference type="STRING" id="3702.Q8VWV6"/>
<dbReference type="PaxDb" id="3702-AT1G18860.1"/>
<dbReference type="ProteomicsDB" id="234391"/>
<dbReference type="Araport" id="AT1G18860"/>
<dbReference type="TAIR" id="AT1G18860">
    <property type="gene designation" value="WRKY61"/>
</dbReference>
<dbReference type="eggNOG" id="ENOG502QVE0">
    <property type="taxonomic scope" value="Eukaryota"/>
</dbReference>
<dbReference type="HOGENOM" id="CLU_021824_2_0_1"/>
<dbReference type="InParanoid" id="Q8VWV6"/>
<dbReference type="PhylomeDB" id="Q8VWV6"/>
<dbReference type="PRO" id="PR:Q8VWV6"/>
<dbReference type="Proteomes" id="UP000006548">
    <property type="component" value="Chromosome 1"/>
</dbReference>
<dbReference type="ExpressionAtlas" id="Q8VWV6">
    <property type="expression patterns" value="baseline and differential"/>
</dbReference>
<dbReference type="GO" id="GO:0005634">
    <property type="term" value="C:nucleus"/>
    <property type="evidence" value="ECO:0007669"/>
    <property type="project" value="UniProtKB-SubCell"/>
</dbReference>
<dbReference type="GO" id="GO:0003700">
    <property type="term" value="F:DNA-binding transcription factor activity"/>
    <property type="evidence" value="ECO:0000250"/>
    <property type="project" value="TAIR"/>
</dbReference>
<dbReference type="GO" id="GO:0043565">
    <property type="term" value="F:sequence-specific DNA binding"/>
    <property type="evidence" value="ECO:0007669"/>
    <property type="project" value="InterPro"/>
</dbReference>
<dbReference type="FunFam" id="2.20.25.80:FF:000002">
    <property type="entry name" value="probable WRKY transcription factor 31"/>
    <property type="match status" value="1"/>
</dbReference>
<dbReference type="Gene3D" id="2.20.25.80">
    <property type="entry name" value="WRKY domain"/>
    <property type="match status" value="1"/>
</dbReference>
<dbReference type="InterPro" id="IPR003657">
    <property type="entry name" value="WRKY_dom"/>
</dbReference>
<dbReference type="InterPro" id="IPR036576">
    <property type="entry name" value="WRKY_dom_sf"/>
</dbReference>
<dbReference type="InterPro" id="IPR044810">
    <property type="entry name" value="WRKY_plant"/>
</dbReference>
<dbReference type="PANTHER" id="PTHR31429">
    <property type="entry name" value="WRKY TRANSCRIPTION FACTOR 36-RELATED"/>
    <property type="match status" value="1"/>
</dbReference>
<dbReference type="PANTHER" id="PTHR31429:SF86">
    <property type="entry name" value="WRKY TRANSCRIPTION FACTOR 61-RELATED"/>
    <property type="match status" value="1"/>
</dbReference>
<dbReference type="Pfam" id="PF03106">
    <property type="entry name" value="WRKY"/>
    <property type="match status" value="1"/>
</dbReference>
<dbReference type="SMART" id="SM00774">
    <property type="entry name" value="WRKY"/>
    <property type="match status" value="1"/>
</dbReference>
<dbReference type="SUPFAM" id="SSF118290">
    <property type="entry name" value="WRKY DNA-binding domain"/>
    <property type="match status" value="1"/>
</dbReference>
<dbReference type="PROSITE" id="PS50811">
    <property type="entry name" value="WRKY"/>
    <property type="match status" value="1"/>
</dbReference>
<name>WRK61_ARATH</name>
<feature type="chain" id="PRO_0000133702" description="Probable WRKY transcription factor 61">
    <location>
        <begin position="1"/>
        <end position="480"/>
    </location>
</feature>
<feature type="DNA-binding region" description="WRKY" evidence="2">
    <location>
        <begin position="185"/>
        <end position="251"/>
    </location>
</feature>
<feature type="region of interest" description="Disordered" evidence="3">
    <location>
        <begin position="30"/>
        <end position="108"/>
    </location>
</feature>
<feature type="compositionally biased region" description="Basic and acidic residues" evidence="3">
    <location>
        <begin position="57"/>
        <end position="66"/>
    </location>
</feature>
<feature type="compositionally biased region" description="Basic and acidic residues" evidence="3">
    <location>
        <begin position="84"/>
        <end position="106"/>
    </location>
</feature>
<feature type="sequence conflict" description="In Ref. 2; AAF27095." evidence="4" ref="2">
    <location>
        <begin position="181"/>
        <end position="189"/>
    </location>
</feature>
<reference key="1">
    <citation type="submission" date="2001-11" db="EMBL/GenBank/DDBJ databases">
        <title>Arabidopsis thaliana transcription factor WRKY61.</title>
        <authorList>
            <person name="Kushnir S."/>
            <person name="Ulker B."/>
            <person name="Somssich I.E."/>
        </authorList>
    </citation>
    <scope>NUCLEOTIDE SEQUENCE [MRNA]</scope>
    <source>
        <strain>cv. Columbia</strain>
        <tissue>Flower</tissue>
    </source>
</reference>
<reference key="2">
    <citation type="journal article" date="2000" name="Nature">
        <title>Sequence and analysis of chromosome 1 of the plant Arabidopsis thaliana.</title>
        <authorList>
            <person name="Theologis A."/>
            <person name="Ecker J.R."/>
            <person name="Palm C.J."/>
            <person name="Federspiel N.A."/>
            <person name="Kaul S."/>
            <person name="White O."/>
            <person name="Alonso J."/>
            <person name="Altafi H."/>
            <person name="Araujo R."/>
            <person name="Bowman C.L."/>
            <person name="Brooks S.Y."/>
            <person name="Buehler E."/>
            <person name="Chan A."/>
            <person name="Chao Q."/>
            <person name="Chen H."/>
            <person name="Cheuk R.F."/>
            <person name="Chin C.W."/>
            <person name="Chung M.K."/>
            <person name="Conn L."/>
            <person name="Conway A.B."/>
            <person name="Conway A.R."/>
            <person name="Creasy T.H."/>
            <person name="Dewar K."/>
            <person name="Dunn P."/>
            <person name="Etgu P."/>
            <person name="Feldblyum T.V."/>
            <person name="Feng J.-D."/>
            <person name="Fong B."/>
            <person name="Fujii C.Y."/>
            <person name="Gill J.E."/>
            <person name="Goldsmith A.D."/>
            <person name="Haas B."/>
            <person name="Hansen N.F."/>
            <person name="Hughes B."/>
            <person name="Huizar L."/>
            <person name="Hunter J.L."/>
            <person name="Jenkins J."/>
            <person name="Johnson-Hopson C."/>
            <person name="Khan S."/>
            <person name="Khaykin E."/>
            <person name="Kim C.J."/>
            <person name="Koo H.L."/>
            <person name="Kremenetskaia I."/>
            <person name="Kurtz D.B."/>
            <person name="Kwan A."/>
            <person name="Lam B."/>
            <person name="Langin-Hooper S."/>
            <person name="Lee A."/>
            <person name="Lee J.M."/>
            <person name="Lenz C.A."/>
            <person name="Li J.H."/>
            <person name="Li Y.-P."/>
            <person name="Lin X."/>
            <person name="Liu S.X."/>
            <person name="Liu Z.A."/>
            <person name="Luros J.S."/>
            <person name="Maiti R."/>
            <person name="Marziali A."/>
            <person name="Militscher J."/>
            <person name="Miranda M."/>
            <person name="Nguyen M."/>
            <person name="Nierman W.C."/>
            <person name="Osborne B.I."/>
            <person name="Pai G."/>
            <person name="Peterson J."/>
            <person name="Pham P.K."/>
            <person name="Rizzo M."/>
            <person name="Rooney T."/>
            <person name="Rowley D."/>
            <person name="Sakano H."/>
            <person name="Salzberg S.L."/>
            <person name="Schwartz J.R."/>
            <person name="Shinn P."/>
            <person name="Southwick A.M."/>
            <person name="Sun H."/>
            <person name="Tallon L.J."/>
            <person name="Tambunga G."/>
            <person name="Toriumi M.J."/>
            <person name="Town C.D."/>
            <person name="Utterback T."/>
            <person name="Van Aken S."/>
            <person name="Vaysberg M."/>
            <person name="Vysotskaia V.S."/>
            <person name="Walker M."/>
            <person name="Wu D."/>
            <person name="Yu G."/>
            <person name="Fraser C.M."/>
            <person name="Venter J.C."/>
            <person name="Davis R.W."/>
        </authorList>
    </citation>
    <scope>NUCLEOTIDE SEQUENCE [LARGE SCALE GENOMIC DNA]</scope>
    <source>
        <strain>cv. Columbia</strain>
    </source>
</reference>
<reference key="3">
    <citation type="journal article" date="2017" name="Plant J.">
        <title>Araport11: a complete reannotation of the Arabidopsis thaliana reference genome.</title>
        <authorList>
            <person name="Cheng C.Y."/>
            <person name="Krishnakumar V."/>
            <person name="Chan A.P."/>
            <person name="Thibaud-Nissen F."/>
            <person name="Schobel S."/>
            <person name="Town C.D."/>
        </authorList>
    </citation>
    <scope>GENOME REANNOTATION</scope>
    <source>
        <strain>cv. Columbia</strain>
    </source>
</reference>
<organism>
    <name type="scientific">Arabidopsis thaliana</name>
    <name type="common">Mouse-ear cress</name>
    <dbReference type="NCBI Taxonomy" id="3702"/>
    <lineage>
        <taxon>Eukaryota</taxon>
        <taxon>Viridiplantae</taxon>
        <taxon>Streptophyta</taxon>
        <taxon>Embryophyta</taxon>
        <taxon>Tracheophyta</taxon>
        <taxon>Spermatophyta</taxon>
        <taxon>Magnoliopsida</taxon>
        <taxon>eudicotyledons</taxon>
        <taxon>Gunneridae</taxon>
        <taxon>Pentapetalae</taxon>
        <taxon>rosids</taxon>
        <taxon>malvids</taxon>
        <taxon>Brassicales</taxon>
        <taxon>Brassicaceae</taxon>
        <taxon>Camelineae</taxon>
        <taxon>Arabidopsis</taxon>
    </lineage>
</organism>
<evidence type="ECO:0000250" key="1"/>
<evidence type="ECO:0000255" key="2">
    <source>
        <dbReference type="PROSITE-ProRule" id="PRU00223"/>
    </source>
</evidence>
<evidence type="ECO:0000256" key="3">
    <source>
        <dbReference type="SAM" id="MobiDB-lite"/>
    </source>
</evidence>
<evidence type="ECO:0000305" key="4"/>